<comment type="function">
    <text evidence="1">Murein-degrading enzyme that degrades murein glycan strands and insoluble, high-molecular weight murein sacculi, with the concomitant formation of a 1,6-anhydromuramoyl product. Lytic transglycosylases (LTs) play an integral role in the metabolism of the peptidoglycan (PG) sacculus. Their lytic action creates space within the PG sacculus to allow for its expansion as well as for the insertion of various structures such as secretion systems and flagella.</text>
</comment>
<comment type="catalytic activity">
    <reaction evidence="1">
        <text>Exolytic cleavage of the (1-&gt;4)-beta-glycosidic linkage between N-acetylmuramic acid (MurNAc) and N-acetylglucosamine (GlcNAc) residues in peptidoglycan, from either the reducing or the non-reducing ends of the peptidoglycan chains, with concomitant formation of a 1,6-anhydrobond in the MurNAc residue.</text>
        <dbReference type="EC" id="4.2.2.n1"/>
    </reaction>
</comment>
<comment type="subcellular location">
    <subcellularLocation>
        <location>Cell outer membrane</location>
        <topology>Peripheral membrane protein</topology>
    </subcellularLocation>
    <text evidence="1">Attached to the inner leaflet of the outer membrane.</text>
</comment>
<comment type="domain">
    <text evidence="1">The N-terminal domain does not have lytic activity and probably modulates enzymatic activity. The C-terminal domain is the catalytic active domain.</text>
</comment>
<comment type="similarity">
    <text evidence="1">In the N-terminal section; belongs to the bacterial solute-binding protein 3 family.</text>
</comment>
<comment type="similarity">
    <text evidence="1">In the C-terminal section; belongs to the transglycosylase Slt family.</text>
</comment>
<feature type="signal peptide" evidence="1">
    <location>
        <begin position="1"/>
        <end position="22"/>
    </location>
</feature>
<feature type="chain" id="PRO_5000129694" description="Membrane-bound lytic murein transglycosylase F">
    <location>
        <begin position="23"/>
        <end position="478"/>
    </location>
</feature>
<feature type="region of interest" description="Non-LT domain" evidence="1">
    <location>
        <begin position="23"/>
        <end position="257"/>
    </location>
</feature>
<feature type="region of interest" description="LT domain" evidence="1">
    <location>
        <begin position="258"/>
        <end position="478"/>
    </location>
</feature>
<feature type="region of interest" description="Disordered" evidence="2">
    <location>
        <begin position="446"/>
        <end position="478"/>
    </location>
</feature>
<feature type="compositionally biased region" description="Acidic residues" evidence="2">
    <location>
        <begin position="451"/>
        <end position="461"/>
    </location>
</feature>
<feature type="active site" evidence="1">
    <location>
        <position position="302"/>
    </location>
</feature>
<reference key="1">
    <citation type="submission" date="2006-08" db="EMBL/GenBank/DDBJ databases">
        <title>Complete sequence of Shewanella sp. MR-4.</title>
        <authorList>
            <consortium name="US DOE Joint Genome Institute"/>
            <person name="Copeland A."/>
            <person name="Lucas S."/>
            <person name="Lapidus A."/>
            <person name="Barry K."/>
            <person name="Detter J.C."/>
            <person name="Glavina del Rio T."/>
            <person name="Hammon N."/>
            <person name="Israni S."/>
            <person name="Dalin E."/>
            <person name="Tice H."/>
            <person name="Pitluck S."/>
            <person name="Kiss H."/>
            <person name="Brettin T."/>
            <person name="Bruce D."/>
            <person name="Han C."/>
            <person name="Tapia R."/>
            <person name="Gilna P."/>
            <person name="Schmutz J."/>
            <person name="Larimer F."/>
            <person name="Land M."/>
            <person name="Hauser L."/>
            <person name="Kyrpides N."/>
            <person name="Mikhailova N."/>
            <person name="Nealson K."/>
            <person name="Konstantinidis K."/>
            <person name="Klappenbach J."/>
            <person name="Tiedje J."/>
            <person name="Richardson P."/>
        </authorList>
    </citation>
    <scope>NUCLEOTIDE SEQUENCE [LARGE SCALE GENOMIC DNA]</scope>
    <source>
        <strain>MR-4</strain>
    </source>
</reference>
<sequence length="478" mass="54814">MTRFLFAIILGFLLTACQQVTVEETEYVPHKLTELRVGTLYGPQIYMTSGQGNSGFDYDMAVLFAEYLDVPLKMVPYTNRAELYEALKKNEIDIIAAGMTETPARREQFRLGPPLYRVNQVLVYREGMPTPKDITDLKGKITVIADSSFVETLTQLQKRHPTLVWDQVTDKDSEELLAMIANKEIDYTIADSSSVQINRRYLPDLRSGLVLEEKLDVVWLLPPTHSDGLMSQLLAFWHQEKLAGTLDHLNEKYFGHVKRFDYIDTRAFLRAIETVLPRYRQLFETHAGDLDWRKLAATSYQESHWNPNARSPTGVRGMMMLTQPTAKEIGITNRLDAEESIRGGAAYLRDMINRLPESIPESQRMWFALASYNIGYAHVEDARKLAESMELNPNAWRDLKKVLPLLQKRKYYQKTRYGYARGSEAVHYVDSIRRYYDTLVWVDNQSKQQNSDEEEPSDLASEDGPAPVPGTLSPDKPK</sequence>
<organism>
    <name type="scientific">Shewanella sp. (strain MR-4)</name>
    <dbReference type="NCBI Taxonomy" id="60480"/>
    <lineage>
        <taxon>Bacteria</taxon>
        <taxon>Pseudomonadati</taxon>
        <taxon>Pseudomonadota</taxon>
        <taxon>Gammaproteobacteria</taxon>
        <taxon>Alteromonadales</taxon>
        <taxon>Shewanellaceae</taxon>
        <taxon>Shewanella</taxon>
    </lineage>
</organism>
<name>MLTF_SHESM</name>
<accession>Q0HKV0</accession>
<protein>
    <recommendedName>
        <fullName evidence="1">Membrane-bound lytic murein transglycosylase F</fullName>
        <ecNumber evidence="1">4.2.2.n1</ecNumber>
    </recommendedName>
    <alternativeName>
        <fullName evidence="1">Murein lyase F</fullName>
    </alternativeName>
</protein>
<evidence type="ECO:0000255" key="1">
    <source>
        <dbReference type="HAMAP-Rule" id="MF_02016"/>
    </source>
</evidence>
<evidence type="ECO:0000256" key="2">
    <source>
        <dbReference type="SAM" id="MobiDB-lite"/>
    </source>
</evidence>
<keyword id="KW-0998">Cell outer membrane</keyword>
<keyword id="KW-0961">Cell wall biogenesis/degradation</keyword>
<keyword id="KW-0456">Lyase</keyword>
<keyword id="KW-0472">Membrane</keyword>
<keyword id="KW-0732">Signal</keyword>
<gene>
    <name evidence="1" type="primary">mltF</name>
    <name type="ordered locus">Shewmr4_1237</name>
</gene>
<proteinExistence type="inferred from homology"/>
<dbReference type="EC" id="4.2.2.n1" evidence="1"/>
<dbReference type="EMBL" id="CP000446">
    <property type="protein sequence ID" value="ABI38317.1"/>
    <property type="molecule type" value="Genomic_DNA"/>
</dbReference>
<dbReference type="RefSeq" id="WP_011622025.1">
    <property type="nucleotide sequence ID" value="NC_008321.1"/>
</dbReference>
<dbReference type="SMR" id="Q0HKV0"/>
<dbReference type="CAZy" id="GH23">
    <property type="family name" value="Glycoside Hydrolase Family 23"/>
</dbReference>
<dbReference type="KEGG" id="she:Shewmr4_1237"/>
<dbReference type="HOGENOM" id="CLU_027494_0_1_6"/>
<dbReference type="GO" id="GO:0009279">
    <property type="term" value="C:cell outer membrane"/>
    <property type="evidence" value="ECO:0007669"/>
    <property type="project" value="UniProtKB-SubCell"/>
</dbReference>
<dbReference type="GO" id="GO:0008933">
    <property type="term" value="F:peptidoglycan lytic transglycosylase activity"/>
    <property type="evidence" value="ECO:0007669"/>
    <property type="project" value="UniProtKB-UniRule"/>
</dbReference>
<dbReference type="GO" id="GO:0016998">
    <property type="term" value="P:cell wall macromolecule catabolic process"/>
    <property type="evidence" value="ECO:0007669"/>
    <property type="project" value="UniProtKB-UniRule"/>
</dbReference>
<dbReference type="GO" id="GO:0071555">
    <property type="term" value="P:cell wall organization"/>
    <property type="evidence" value="ECO:0007669"/>
    <property type="project" value="UniProtKB-KW"/>
</dbReference>
<dbReference type="GO" id="GO:0009253">
    <property type="term" value="P:peptidoglycan catabolic process"/>
    <property type="evidence" value="ECO:0007669"/>
    <property type="project" value="TreeGrafter"/>
</dbReference>
<dbReference type="CDD" id="cd13403">
    <property type="entry name" value="MLTF-like"/>
    <property type="match status" value="1"/>
</dbReference>
<dbReference type="CDD" id="cd01009">
    <property type="entry name" value="PBP2_YfhD_N"/>
    <property type="match status" value="1"/>
</dbReference>
<dbReference type="FunFam" id="1.10.530.10:FF:000003">
    <property type="entry name" value="Membrane-bound lytic murein transglycosylase F"/>
    <property type="match status" value="1"/>
</dbReference>
<dbReference type="FunFam" id="3.40.190.10:FF:000325">
    <property type="entry name" value="Membrane-bound lytic murein transglycosylase F"/>
    <property type="match status" value="1"/>
</dbReference>
<dbReference type="Gene3D" id="1.10.530.10">
    <property type="match status" value="1"/>
</dbReference>
<dbReference type="Gene3D" id="3.40.190.10">
    <property type="entry name" value="Periplasmic binding protein-like II"/>
    <property type="match status" value="2"/>
</dbReference>
<dbReference type="HAMAP" id="MF_02016">
    <property type="entry name" value="MltF"/>
    <property type="match status" value="1"/>
</dbReference>
<dbReference type="InterPro" id="IPR023346">
    <property type="entry name" value="Lysozyme-like_dom_sf"/>
</dbReference>
<dbReference type="InterPro" id="IPR023703">
    <property type="entry name" value="MltF"/>
</dbReference>
<dbReference type="InterPro" id="IPR001638">
    <property type="entry name" value="Solute-binding_3/MltF_N"/>
</dbReference>
<dbReference type="InterPro" id="IPR008258">
    <property type="entry name" value="Transglycosylase_SLT_dom_1"/>
</dbReference>
<dbReference type="NCBIfam" id="NF008112">
    <property type="entry name" value="PRK10859.1"/>
    <property type="match status" value="1"/>
</dbReference>
<dbReference type="PANTHER" id="PTHR35936">
    <property type="entry name" value="MEMBRANE-BOUND LYTIC MUREIN TRANSGLYCOSYLASE F"/>
    <property type="match status" value="1"/>
</dbReference>
<dbReference type="PANTHER" id="PTHR35936:SF32">
    <property type="entry name" value="MEMBRANE-BOUND LYTIC MUREIN TRANSGLYCOSYLASE F"/>
    <property type="match status" value="1"/>
</dbReference>
<dbReference type="Pfam" id="PF00497">
    <property type="entry name" value="SBP_bac_3"/>
    <property type="match status" value="1"/>
</dbReference>
<dbReference type="Pfam" id="PF01464">
    <property type="entry name" value="SLT"/>
    <property type="match status" value="1"/>
</dbReference>
<dbReference type="SMART" id="SM00062">
    <property type="entry name" value="PBPb"/>
    <property type="match status" value="1"/>
</dbReference>
<dbReference type="SUPFAM" id="SSF53955">
    <property type="entry name" value="Lysozyme-like"/>
    <property type="match status" value="1"/>
</dbReference>
<dbReference type="SUPFAM" id="SSF53850">
    <property type="entry name" value="Periplasmic binding protein-like II"/>
    <property type="match status" value="1"/>
</dbReference>
<dbReference type="PROSITE" id="PS51257">
    <property type="entry name" value="PROKAR_LIPOPROTEIN"/>
    <property type="match status" value="1"/>
</dbReference>